<feature type="chain" id="PRO_0000132219" description="Small ribosomal subunit protein uS13">
    <location>
        <begin position="1"/>
        <end position="152"/>
    </location>
</feature>
<dbReference type="EMBL" id="AF548335">
    <property type="protein sequence ID" value="AAN52390.1"/>
    <property type="molecule type" value="mRNA"/>
</dbReference>
<dbReference type="SMR" id="Q8ISP0"/>
<dbReference type="GeneID" id="109466081"/>
<dbReference type="KEGG" id="bbel:109466081"/>
<dbReference type="OrthoDB" id="1702480at2759"/>
<dbReference type="Proteomes" id="UP000515135">
    <property type="component" value="Unplaced"/>
</dbReference>
<dbReference type="GO" id="GO:0005829">
    <property type="term" value="C:cytosol"/>
    <property type="evidence" value="ECO:0007669"/>
    <property type="project" value="TreeGrafter"/>
</dbReference>
<dbReference type="GO" id="GO:0015935">
    <property type="term" value="C:small ribosomal subunit"/>
    <property type="evidence" value="ECO:0007669"/>
    <property type="project" value="TreeGrafter"/>
</dbReference>
<dbReference type="GO" id="GO:0019843">
    <property type="term" value="F:rRNA binding"/>
    <property type="evidence" value="ECO:0007669"/>
    <property type="project" value="UniProtKB-KW"/>
</dbReference>
<dbReference type="GO" id="GO:0003735">
    <property type="term" value="F:structural constituent of ribosome"/>
    <property type="evidence" value="ECO:0007669"/>
    <property type="project" value="InterPro"/>
</dbReference>
<dbReference type="GO" id="GO:0006412">
    <property type="term" value="P:translation"/>
    <property type="evidence" value="ECO:0007669"/>
    <property type="project" value="InterPro"/>
</dbReference>
<dbReference type="FunFam" id="1.10.8.50:FF:000002">
    <property type="entry name" value="40S ribosomal protein S18"/>
    <property type="match status" value="1"/>
</dbReference>
<dbReference type="FunFam" id="4.10.910.10:FF:000002">
    <property type="entry name" value="40S ribosomal protein S18"/>
    <property type="match status" value="1"/>
</dbReference>
<dbReference type="Gene3D" id="1.10.8.50">
    <property type="match status" value="1"/>
</dbReference>
<dbReference type="Gene3D" id="4.10.910.10">
    <property type="entry name" value="30s ribosomal protein s13, domain 2"/>
    <property type="match status" value="1"/>
</dbReference>
<dbReference type="HAMAP" id="MF_01315">
    <property type="entry name" value="Ribosomal_uS13"/>
    <property type="match status" value="1"/>
</dbReference>
<dbReference type="InterPro" id="IPR027437">
    <property type="entry name" value="Rbsml_uS13_C"/>
</dbReference>
<dbReference type="InterPro" id="IPR001892">
    <property type="entry name" value="Ribosomal_uS13"/>
</dbReference>
<dbReference type="InterPro" id="IPR010979">
    <property type="entry name" value="Ribosomal_uS13-like_H2TH"/>
</dbReference>
<dbReference type="InterPro" id="IPR018269">
    <property type="entry name" value="Ribosomal_uS13_CS"/>
</dbReference>
<dbReference type="NCBIfam" id="NF003140">
    <property type="entry name" value="PRK04053.1"/>
    <property type="match status" value="1"/>
</dbReference>
<dbReference type="PANTHER" id="PTHR10871">
    <property type="entry name" value="30S RIBOSOMAL PROTEIN S13/40S RIBOSOMAL PROTEIN S18"/>
    <property type="match status" value="1"/>
</dbReference>
<dbReference type="PANTHER" id="PTHR10871:SF3">
    <property type="entry name" value="SMALL RIBOSOMAL SUBUNIT PROTEIN US13"/>
    <property type="match status" value="1"/>
</dbReference>
<dbReference type="Pfam" id="PF00416">
    <property type="entry name" value="Ribosomal_S13"/>
    <property type="match status" value="1"/>
</dbReference>
<dbReference type="PIRSF" id="PIRSF002134">
    <property type="entry name" value="Ribosomal_S13"/>
    <property type="match status" value="1"/>
</dbReference>
<dbReference type="SUPFAM" id="SSF46946">
    <property type="entry name" value="S13-like H2TH domain"/>
    <property type="match status" value="1"/>
</dbReference>
<dbReference type="PROSITE" id="PS00646">
    <property type="entry name" value="RIBOSOMAL_S13_1"/>
    <property type="match status" value="1"/>
</dbReference>
<dbReference type="PROSITE" id="PS50159">
    <property type="entry name" value="RIBOSOMAL_S13_2"/>
    <property type="match status" value="1"/>
</dbReference>
<protein>
    <recommendedName>
        <fullName evidence="2">Small ribosomal subunit protein uS13</fullName>
    </recommendedName>
    <alternativeName>
        <fullName>40S ribosomal protein S18</fullName>
    </alternativeName>
</protein>
<comment type="function">
    <text evidence="1">Located at the top of the head of the 40S subunit, it contacts several helices of the 18S rRNA.</text>
</comment>
<comment type="subcellular location">
    <subcellularLocation>
        <location>Cytoplasm</location>
    </subcellularLocation>
</comment>
<comment type="similarity">
    <text evidence="2">Belongs to the universal ribosomal protein uS13 family.</text>
</comment>
<gene>
    <name type="primary">RPS18</name>
</gene>
<name>RS18_BRABE</name>
<keyword id="KW-0963">Cytoplasm</keyword>
<keyword id="KW-1185">Reference proteome</keyword>
<keyword id="KW-0687">Ribonucleoprotein</keyword>
<keyword id="KW-0689">Ribosomal protein</keyword>
<keyword id="KW-0694">RNA-binding</keyword>
<keyword id="KW-0699">rRNA-binding</keyword>
<accession>Q8ISP0</accession>
<proteinExistence type="evidence at transcript level"/>
<evidence type="ECO:0000250" key="1"/>
<evidence type="ECO:0000305" key="2"/>
<organism>
    <name type="scientific">Branchiostoma belcheri</name>
    <name type="common">Amphioxus</name>
    <dbReference type="NCBI Taxonomy" id="7741"/>
    <lineage>
        <taxon>Eukaryota</taxon>
        <taxon>Metazoa</taxon>
        <taxon>Chordata</taxon>
        <taxon>Cephalochordata</taxon>
        <taxon>Leptocardii</taxon>
        <taxon>Amphioxiformes</taxon>
        <taxon>Branchiostomatidae</taxon>
        <taxon>Branchiostoma</taxon>
    </lineage>
</organism>
<reference key="1">
    <citation type="submission" date="2002-09" db="EMBL/GenBank/DDBJ databases">
        <title>Cloning of ribosomal protein S18 gene of amphioxus.</title>
        <authorList>
            <person name="Chen Z.K."/>
            <person name="Zhang H.W."/>
            <person name="Yang H.M."/>
        </authorList>
    </citation>
    <scope>NUCLEOTIDE SEQUENCE [MRNA]</scope>
</reference>
<sequence length="152" mass="17832">MSLVIPEKFQHILRVMNTNIDGRRKIMFALTSIKGVGRRYSNIVCKKADIDLSKRAGELSDEEVERLITIMQNPRQYKIPDWFLNRQKDVKDGKYSQVMANSLDNKLREDLERLKKIRAHRGLRHYWGLRVRGQHTKTTGRRGRTVGVSKKK</sequence>